<proteinExistence type="inferred from homology"/>
<reference key="1">
    <citation type="journal article" date="2000" name="Nature">
        <title>The genome sequence of the plant pathogen Xylella fastidiosa.</title>
        <authorList>
            <person name="Simpson A.J.G."/>
            <person name="Reinach F.C."/>
            <person name="Arruda P."/>
            <person name="Abreu F.A."/>
            <person name="Acencio M."/>
            <person name="Alvarenga R."/>
            <person name="Alves L.M.C."/>
            <person name="Araya J.E."/>
            <person name="Baia G.S."/>
            <person name="Baptista C.S."/>
            <person name="Barros M.H."/>
            <person name="Bonaccorsi E.D."/>
            <person name="Bordin S."/>
            <person name="Bove J.M."/>
            <person name="Briones M.R.S."/>
            <person name="Bueno M.R.P."/>
            <person name="Camargo A.A."/>
            <person name="Camargo L.E.A."/>
            <person name="Carraro D.M."/>
            <person name="Carrer H."/>
            <person name="Colauto N.B."/>
            <person name="Colombo C."/>
            <person name="Costa F.F."/>
            <person name="Costa M.C.R."/>
            <person name="Costa-Neto C.M."/>
            <person name="Coutinho L.L."/>
            <person name="Cristofani M."/>
            <person name="Dias-Neto E."/>
            <person name="Docena C."/>
            <person name="El-Dorry H."/>
            <person name="Facincani A.P."/>
            <person name="Ferreira A.J.S."/>
            <person name="Ferreira V.C.A."/>
            <person name="Ferro J.A."/>
            <person name="Fraga J.S."/>
            <person name="Franca S.C."/>
            <person name="Franco M.C."/>
            <person name="Frohme M."/>
            <person name="Furlan L.R."/>
            <person name="Garnier M."/>
            <person name="Goldman G.H."/>
            <person name="Goldman M.H.S."/>
            <person name="Gomes S.L."/>
            <person name="Gruber A."/>
            <person name="Ho P.L."/>
            <person name="Hoheisel J.D."/>
            <person name="Junqueira M.L."/>
            <person name="Kemper E.L."/>
            <person name="Kitajima J.P."/>
            <person name="Krieger J.E."/>
            <person name="Kuramae E.E."/>
            <person name="Laigret F."/>
            <person name="Lambais M.R."/>
            <person name="Leite L.C.C."/>
            <person name="Lemos E.G.M."/>
            <person name="Lemos M.V.F."/>
            <person name="Lopes S.A."/>
            <person name="Lopes C.R."/>
            <person name="Machado J.A."/>
            <person name="Machado M.A."/>
            <person name="Madeira A.M.B.N."/>
            <person name="Madeira H.M.F."/>
            <person name="Marino C.L."/>
            <person name="Marques M.V."/>
            <person name="Martins E.A.L."/>
            <person name="Martins E.M.F."/>
            <person name="Matsukuma A.Y."/>
            <person name="Menck C.F.M."/>
            <person name="Miracca E.C."/>
            <person name="Miyaki C.Y."/>
            <person name="Monteiro-Vitorello C.B."/>
            <person name="Moon D.H."/>
            <person name="Nagai M.A."/>
            <person name="Nascimento A.L.T.O."/>
            <person name="Netto L.E.S."/>
            <person name="Nhani A. Jr."/>
            <person name="Nobrega F.G."/>
            <person name="Nunes L.R."/>
            <person name="Oliveira M.A."/>
            <person name="de Oliveira M.C."/>
            <person name="de Oliveira R.C."/>
            <person name="Palmieri D.A."/>
            <person name="Paris A."/>
            <person name="Peixoto B.R."/>
            <person name="Pereira G.A.G."/>
            <person name="Pereira H.A. Jr."/>
            <person name="Pesquero J.B."/>
            <person name="Quaggio R.B."/>
            <person name="Roberto P.G."/>
            <person name="Rodrigues V."/>
            <person name="de Rosa A.J.M."/>
            <person name="de Rosa V.E. Jr."/>
            <person name="de Sa R.G."/>
            <person name="Santelli R.V."/>
            <person name="Sawasaki H.E."/>
            <person name="da Silva A.C.R."/>
            <person name="da Silva A.M."/>
            <person name="da Silva F.R."/>
            <person name="Silva W.A. Jr."/>
            <person name="da Silveira J.F."/>
            <person name="Silvestri M.L.Z."/>
            <person name="Siqueira W.J."/>
            <person name="de Souza A.A."/>
            <person name="de Souza A.P."/>
            <person name="Terenzi M.F."/>
            <person name="Truffi D."/>
            <person name="Tsai S.M."/>
            <person name="Tsuhako M.H."/>
            <person name="Vallada H."/>
            <person name="Van Sluys M.A."/>
            <person name="Verjovski-Almeida S."/>
            <person name="Vettore A.L."/>
            <person name="Zago M.A."/>
            <person name="Zatz M."/>
            <person name="Meidanis J."/>
            <person name="Setubal J.C."/>
        </authorList>
    </citation>
    <scope>NUCLEOTIDE SEQUENCE [LARGE SCALE GENOMIC DNA]</scope>
    <source>
        <strain>9a5c</strain>
    </source>
</reference>
<gene>
    <name evidence="1" type="primary">prmC</name>
    <name type="synonym">hemK</name>
    <name type="ordered locus">XF_1512</name>
</gene>
<keyword id="KW-0489">Methyltransferase</keyword>
<keyword id="KW-0949">S-adenosyl-L-methionine</keyword>
<keyword id="KW-0808">Transferase</keyword>
<feature type="chain" id="PRO_0000157171" description="Release factor glutamine methyltransferase">
    <location>
        <begin position="1"/>
        <end position="275"/>
    </location>
</feature>
<feature type="binding site" evidence="1">
    <location>
        <begin position="114"/>
        <end position="118"/>
    </location>
    <ligand>
        <name>S-adenosyl-L-methionine</name>
        <dbReference type="ChEBI" id="CHEBI:59789"/>
    </ligand>
</feature>
<feature type="binding site" evidence="1">
    <location>
        <position position="137"/>
    </location>
    <ligand>
        <name>S-adenosyl-L-methionine</name>
        <dbReference type="ChEBI" id="CHEBI:59789"/>
    </ligand>
</feature>
<feature type="binding site" evidence="1">
    <location>
        <position position="165"/>
    </location>
    <ligand>
        <name>S-adenosyl-L-methionine</name>
        <dbReference type="ChEBI" id="CHEBI:59789"/>
    </ligand>
</feature>
<feature type="binding site" evidence="1">
    <location>
        <begin position="180"/>
        <end position="183"/>
    </location>
    <ligand>
        <name>substrate</name>
    </ligand>
</feature>
<feature type="binding site" evidence="1">
    <location>
        <position position="180"/>
    </location>
    <ligand>
        <name>S-adenosyl-L-methionine</name>
        <dbReference type="ChEBI" id="CHEBI:59789"/>
    </ligand>
</feature>
<sequence>MPSPIALLTAATERIERVDAEALLLHALDCDRAWLFTHGDIPLAAAATESFQALVEQRARGIPVAYLIGRRGFWTLDVMVSSATLIPRAETETLVEQALQRLDHASERRVADLGTGSGAIALAIACERPQAQVLATDNSAAALDIAARNASAHGLNHVVFREGDWYEALLGERFDLIVSNPPYIAVTDPHLTQGDLRFEPPSALISGGDGLDALRILTAGAPAYLRPGGWLVMEHGWDQGAAMRTLLHTAGLVAVATVQDLEARDRVTVGRCPGF</sequence>
<dbReference type="EC" id="2.1.1.297" evidence="1"/>
<dbReference type="EMBL" id="AE003849">
    <property type="protein sequence ID" value="AAF84321.1"/>
    <property type="molecule type" value="Genomic_DNA"/>
</dbReference>
<dbReference type="PIR" id="G82671">
    <property type="entry name" value="G82671"/>
</dbReference>
<dbReference type="RefSeq" id="WP_010894013.1">
    <property type="nucleotide sequence ID" value="NC_002488.3"/>
</dbReference>
<dbReference type="SMR" id="Q9PD67"/>
<dbReference type="STRING" id="160492.XF_1512"/>
<dbReference type="KEGG" id="xfa:XF_1512"/>
<dbReference type="eggNOG" id="COG2890">
    <property type="taxonomic scope" value="Bacteria"/>
</dbReference>
<dbReference type="HOGENOM" id="CLU_018398_3_1_6"/>
<dbReference type="Proteomes" id="UP000000812">
    <property type="component" value="Chromosome"/>
</dbReference>
<dbReference type="GO" id="GO:0003676">
    <property type="term" value="F:nucleic acid binding"/>
    <property type="evidence" value="ECO:0007669"/>
    <property type="project" value="InterPro"/>
</dbReference>
<dbReference type="GO" id="GO:0102559">
    <property type="term" value="F:protein-(glutamine-N5) methyltransferase activity"/>
    <property type="evidence" value="ECO:0007669"/>
    <property type="project" value="UniProtKB-EC"/>
</dbReference>
<dbReference type="GO" id="GO:0036009">
    <property type="term" value="F:protein-glutamine N-methyltransferase activity"/>
    <property type="evidence" value="ECO:0007669"/>
    <property type="project" value="UniProtKB-UniRule"/>
</dbReference>
<dbReference type="GO" id="GO:0032259">
    <property type="term" value="P:methylation"/>
    <property type="evidence" value="ECO:0007669"/>
    <property type="project" value="UniProtKB-KW"/>
</dbReference>
<dbReference type="CDD" id="cd02440">
    <property type="entry name" value="AdoMet_MTases"/>
    <property type="match status" value="1"/>
</dbReference>
<dbReference type="FunFam" id="3.40.50.150:FF:000053">
    <property type="entry name" value="Release factor glutamine methyltransferase"/>
    <property type="match status" value="1"/>
</dbReference>
<dbReference type="Gene3D" id="1.10.8.10">
    <property type="entry name" value="DNA helicase RuvA subunit, C-terminal domain"/>
    <property type="match status" value="1"/>
</dbReference>
<dbReference type="Gene3D" id="3.40.50.150">
    <property type="entry name" value="Vaccinia Virus protein VP39"/>
    <property type="match status" value="1"/>
</dbReference>
<dbReference type="HAMAP" id="MF_02126">
    <property type="entry name" value="RF_methyltr_PrmC"/>
    <property type="match status" value="1"/>
</dbReference>
<dbReference type="InterPro" id="IPR002052">
    <property type="entry name" value="DNA_methylase_N6_adenine_CS"/>
</dbReference>
<dbReference type="InterPro" id="IPR004556">
    <property type="entry name" value="HemK-like"/>
</dbReference>
<dbReference type="InterPro" id="IPR050320">
    <property type="entry name" value="N5-glutamine_MTase"/>
</dbReference>
<dbReference type="InterPro" id="IPR040758">
    <property type="entry name" value="PrmC_N"/>
</dbReference>
<dbReference type="InterPro" id="IPR019874">
    <property type="entry name" value="RF_methyltr_PrmC"/>
</dbReference>
<dbReference type="InterPro" id="IPR029063">
    <property type="entry name" value="SAM-dependent_MTases_sf"/>
</dbReference>
<dbReference type="InterPro" id="IPR007848">
    <property type="entry name" value="Small_mtfrase_dom"/>
</dbReference>
<dbReference type="NCBIfam" id="TIGR00536">
    <property type="entry name" value="hemK_fam"/>
    <property type="match status" value="1"/>
</dbReference>
<dbReference type="NCBIfam" id="TIGR03534">
    <property type="entry name" value="RF_mod_PrmC"/>
    <property type="match status" value="1"/>
</dbReference>
<dbReference type="PANTHER" id="PTHR18895">
    <property type="entry name" value="HEMK METHYLTRANSFERASE"/>
    <property type="match status" value="1"/>
</dbReference>
<dbReference type="PANTHER" id="PTHR18895:SF74">
    <property type="entry name" value="MTRF1L RELEASE FACTOR GLUTAMINE METHYLTRANSFERASE"/>
    <property type="match status" value="1"/>
</dbReference>
<dbReference type="Pfam" id="PF05175">
    <property type="entry name" value="MTS"/>
    <property type="match status" value="1"/>
</dbReference>
<dbReference type="Pfam" id="PF17827">
    <property type="entry name" value="PrmC_N"/>
    <property type="match status" value="1"/>
</dbReference>
<dbReference type="SUPFAM" id="SSF53335">
    <property type="entry name" value="S-adenosyl-L-methionine-dependent methyltransferases"/>
    <property type="match status" value="1"/>
</dbReference>
<evidence type="ECO:0000255" key="1">
    <source>
        <dbReference type="HAMAP-Rule" id="MF_02126"/>
    </source>
</evidence>
<accession>Q9PD67</accession>
<organism>
    <name type="scientific">Xylella fastidiosa (strain 9a5c)</name>
    <dbReference type="NCBI Taxonomy" id="160492"/>
    <lineage>
        <taxon>Bacteria</taxon>
        <taxon>Pseudomonadati</taxon>
        <taxon>Pseudomonadota</taxon>
        <taxon>Gammaproteobacteria</taxon>
        <taxon>Lysobacterales</taxon>
        <taxon>Lysobacteraceae</taxon>
        <taxon>Xylella</taxon>
    </lineage>
</organism>
<name>PRMC_XYLFA</name>
<protein>
    <recommendedName>
        <fullName evidence="1">Release factor glutamine methyltransferase</fullName>
        <shortName evidence="1">RF MTase</shortName>
        <ecNumber evidence="1">2.1.1.297</ecNumber>
    </recommendedName>
    <alternativeName>
        <fullName>M.XfaHemK2P</fullName>
    </alternativeName>
    <alternativeName>
        <fullName evidence="1">N5-glutamine methyltransferase PrmC</fullName>
    </alternativeName>
    <alternativeName>
        <fullName evidence="1">Protein-(glutamine-N5) MTase PrmC</fullName>
    </alternativeName>
    <alternativeName>
        <fullName evidence="1">Protein-glutamine N-methyltransferase PrmC</fullName>
    </alternativeName>
</protein>
<comment type="function">
    <text evidence="1">Methylates the class 1 translation termination release factors RF1/PrfA and RF2/PrfB on the glutamine residue of the universally conserved GGQ motif.</text>
</comment>
<comment type="catalytic activity">
    <reaction evidence="1">
        <text>L-glutaminyl-[peptide chain release factor] + S-adenosyl-L-methionine = N(5)-methyl-L-glutaminyl-[peptide chain release factor] + S-adenosyl-L-homocysteine + H(+)</text>
        <dbReference type="Rhea" id="RHEA:42896"/>
        <dbReference type="Rhea" id="RHEA-COMP:10271"/>
        <dbReference type="Rhea" id="RHEA-COMP:10272"/>
        <dbReference type="ChEBI" id="CHEBI:15378"/>
        <dbReference type="ChEBI" id="CHEBI:30011"/>
        <dbReference type="ChEBI" id="CHEBI:57856"/>
        <dbReference type="ChEBI" id="CHEBI:59789"/>
        <dbReference type="ChEBI" id="CHEBI:61891"/>
        <dbReference type="EC" id="2.1.1.297"/>
    </reaction>
</comment>
<comment type="similarity">
    <text evidence="1">Belongs to the protein N5-glutamine methyltransferase family. PrmC subfamily.</text>
</comment>